<organism>
    <name type="scientific">Oryza sativa subsp. japonica</name>
    <name type="common">Rice</name>
    <dbReference type="NCBI Taxonomy" id="39947"/>
    <lineage>
        <taxon>Eukaryota</taxon>
        <taxon>Viridiplantae</taxon>
        <taxon>Streptophyta</taxon>
        <taxon>Embryophyta</taxon>
        <taxon>Tracheophyta</taxon>
        <taxon>Spermatophyta</taxon>
        <taxon>Magnoliopsida</taxon>
        <taxon>Liliopsida</taxon>
        <taxon>Poales</taxon>
        <taxon>Poaceae</taxon>
        <taxon>BOP clade</taxon>
        <taxon>Oryzoideae</taxon>
        <taxon>Oryzeae</taxon>
        <taxon>Oryzinae</taxon>
        <taxon>Oryza</taxon>
        <taxon>Oryza sativa</taxon>
    </lineage>
</organism>
<comment type="function">
    <text evidence="5">Catalyzes the conversion of glucose-6-phosphate to fructose-6-phosphate, the second step in glycolysis, and the reverse reaction during gluconeogenesis.</text>
</comment>
<comment type="catalytic activity">
    <reaction evidence="2">
        <text>alpha-D-glucose 6-phosphate = beta-D-fructose 6-phosphate</text>
        <dbReference type="Rhea" id="RHEA:11816"/>
        <dbReference type="ChEBI" id="CHEBI:57634"/>
        <dbReference type="ChEBI" id="CHEBI:58225"/>
        <dbReference type="EC" id="5.3.1.9"/>
    </reaction>
</comment>
<comment type="pathway">
    <text evidence="4">Carbohydrate degradation; glycolysis; D-glyceraldehyde 3-phosphate and glycerone phosphate from D-glucose: step 2/4.</text>
</comment>
<comment type="subunit">
    <text evidence="1">Homodimer.</text>
</comment>
<comment type="subcellular location">
    <subcellularLocation>
        <location evidence="5">Cytoplasm</location>
    </subcellularLocation>
</comment>
<comment type="similarity">
    <text evidence="4">Belongs to the GPI family.</text>
</comment>
<comment type="sequence caution" evidence="4">
    <conflict type="frameshift">
        <sequence resource="EMBL-CDS" id="BAA08149"/>
    </conflict>
</comment>
<accession>P42863</accession>
<accession>Q652G2</accession>
<feature type="chain" id="PRO_0000180567" description="Glucose-6-phosphate isomerase, cytosolic B">
    <location>
        <begin position="1"/>
        <end position="567"/>
    </location>
</feature>
<feature type="active site" description="Proton donor" evidence="1">
    <location>
        <position position="360"/>
    </location>
</feature>
<feature type="active site" evidence="1">
    <location>
        <position position="391"/>
    </location>
</feature>
<feature type="active site" evidence="1">
    <location>
        <position position="516"/>
    </location>
</feature>
<feature type="binding site" evidence="1">
    <location>
        <begin position="156"/>
        <end position="157"/>
    </location>
    <ligand>
        <name>D-glucose 6-phosphate</name>
        <dbReference type="ChEBI" id="CHEBI:61548"/>
    </ligand>
</feature>
<feature type="binding site" evidence="1">
    <location>
        <begin position="212"/>
        <end position="217"/>
    </location>
    <ligand>
        <name>D-glucose 6-phosphate</name>
        <dbReference type="ChEBI" id="CHEBI:61548"/>
    </ligand>
</feature>
<feature type="binding site" evidence="1">
    <location>
        <position position="356"/>
    </location>
    <ligand>
        <name>D-glucose 6-phosphate</name>
        <dbReference type="ChEBI" id="CHEBI:61548"/>
    </ligand>
</feature>
<feature type="binding site" evidence="1">
    <location>
        <position position="360"/>
    </location>
    <ligand>
        <name>D-glucose 6-phosphate</name>
        <dbReference type="ChEBI" id="CHEBI:61548"/>
    </ligand>
</feature>
<feature type="binding site" evidence="1">
    <location>
        <position position="391"/>
    </location>
    <ligand>
        <name>D-glucose 6-phosphate</name>
        <dbReference type="ChEBI" id="CHEBI:61548"/>
    </ligand>
</feature>
<feature type="binding site" evidence="1">
    <location>
        <position position="516"/>
    </location>
    <ligand>
        <name>D-glucose 6-phosphate</name>
        <dbReference type="ChEBI" id="CHEBI:61548"/>
    </ligand>
</feature>
<feature type="sequence conflict" description="In Ref. 1; BAA08149." evidence="4" ref="1">
    <original>S</original>
    <variation>P</variation>
    <location>
        <position position="374"/>
    </location>
</feature>
<feature type="sequence conflict" description="In Ref. 1; BAA08149." evidence="4" ref="1">
    <original>T</original>
    <variation>S</variation>
    <location>
        <position position="377"/>
    </location>
</feature>
<evidence type="ECO:0000250" key="1">
    <source>
        <dbReference type="UniProtKB" id="P06745"/>
    </source>
</evidence>
<evidence type="ECO:0000269" key="2">
    <source>
    </source>
</evidence>
<evidence type="ECO:0000303" key="3">
    <source>
    </source>
</evidence>
<evidence type="ECO:0000305" key="4"/>
<evidence type="ECO:0000305" key="5">
    <source>
    </source>
</evidence>
<evidence type="ECO:0000312" key="6">
    <source>
        <dbReference type="EMBL" id="AP014962"/>
    </source>
</evidence>
<evidence type="ECO:0000312" key="7">
    <source>
        <dbReference type="EMBL" id="BAD46305.1"/>
    </source>
</evidence>
<name>G6PIB_ORYSJ</name>
<keyword id="KW-0963">Cytoplasm</keyword>
<keyword id="KW-0312">Gluconeogenesis</keyword>
<keyword id="KW-0324">Glycolysis</keyword>
<keyword id="KW-0413">Isomerase</keyword>
<keyword id="KW-1185">Reference proteome</keyword>
<proteinExistence type="evidence at protein level"/>
<dbReference type="EC" id="5.3.1.9" evidence="2"/>
<dbReference type="EMBL" id="D45218">
    <property type="protein sequence ID" value="BAA08149.1"/>
    <property type="status" value="ALT_FRAME"/>
    <property type="molecule type" value="mRNA"/>
</dbReference>
<dbReference type="EMBL" id="AP005619">
    <property type="protein sequence ID" value="BAD46305.1"/>
    <property type="molecule type" value="Genomic_DNA"/>
</dbReference>
<dbReference type="EMBL" id="AP014962">
    <property type="status" value="NOT_ANNOTATED_CDS"/>
    <property type="molecule type" value="Genomic_DNA"/>
</dbReference>
<dbReference type="PIR" id="T03950">
    <property type="entry name" value="T03950"/>
</dbReference>
<dbReference type="RefSeq" id="XP_015644261.1">
    <property type="nucleotide sequence ID" value="XM_015788775.1"/>
</dbReference>
<dbReference type="RefSeq" id="XP_015644262.1">
    <property type="nucleotide sequence ID" value="XM_015788776.1"/>
</dbReference>
<dbReference type="RefSeq" id="XP_015644263.1">
    <property type="nucleotide sequence ID" value="XM_015788777.1"/>
</dbReference>
<dbReference type="SMR" id="P42863"/>
<dbReference type="FunCoup" id="P42863">
    <property type="interactions" value="2818"/>
</dbReference>
<dbReference type="STRING" id="39947.P42863"/>
<dbReference type="iPTMnet" id="P42863"/>
<dbReference type="PaxDb" id="39947-P42863"/>
<dbReference type="eggNOG" id="KOG2446">
    <property type="taxonomic scope" value="Eukaryota"/>
</dbReference>
<dbReference type="HOGENOM" id="CLU_017947_4_0_1"/>
<dbReference type="InParanoid" id="P42863"/>
<dbReference type="OrthoDB" id="5831190at2759"/>
<dbReference type="PlantReactome" id="R-OSA-1119410">
    <property type="pathway name" value="Ascorbate biosynthesis"/>
</dbReference>
<dbReference type="PlantReactome" id="R-OSA-1119477">
    <property type="pathway name" value="Starch biosynthesis"/>
</dbReference>
<dbReference type="PlantReactome" id="R-OSA-1119570">
    <property type="pathway name" value="Cytosolic glycolysis"/>
</dbReference>
<dbReference type="UniPathway" id="UPA00109">
    <property type="reaction ID" value="UER00181"/>
</dbReference>
<dbReference type="Proteomes" id="UP000000763">
    <property type="component" value="Chromosome 6"/>
</dbReference>
<dbReference type="Proteomes" id="UP000059680">
    <property type="component" value="Chromosome 6"/>
</dbReference>
<dbReference type="GO" id="GO:0005829">
    <property type="term" value="C:cytosol"/>
    <property type="evidence" value="ECO:0000314"/>
    <property type="project" value="Gramene"/>
</dbReference>
<dbReference type="GO" id="GO:0097367">
    <property type="term" value="F:carbohydrate derivative binding"/>
    <property type="evidence" value="ECO:0007669"/>
    <property type="project" value="InterPro"/>
</dbReference>
<dbReference type="GO" id="GO:0004347">
    <property type="term" value="F:glucose-6-phosphate isomerase activity"/>
    <property type="evidence" value="ECO:0000314"/>
    <property type="project" value="Gramene"/>
</dbReference>
<dbReference type="GO" id="GO:0016853">
    <property type="term" value="F:isomerase activity"/>
    <property type="evidence" value="ECO:0000250"/>
    <property type="project" value="Gramene"/>
</dbReference>
<dbReference type="GO" id="GO:0048029">
    <property type="term" value="F:monosaccharide binding"/>
    <property type="evidence" value="ECO:0000318"/>
    <property type="project" value="GO_Central"/>
</dbReference>
<dbReference type="GO" id="GO:0006094">
    <property type="term" value="P:gluconeogenesis"/>
    <property type="evidence" value="ECO:0000270"/>
    <property type="project" value="Gramene"/>
</dbReference>
<dbReference type="GO" id="GO:0051156">
    <property type="term" value="P:glucose 6-phosphate metabolic process"/>
    <property type="evidence" value="ECO:0000318"/>
    <property type="project" value="GO_Central"/>
</dbReference>
<dbReference type="GO" id="GO:0006096">
    <property type="term" value="P:glycolytic process"/>
    <property type="evidence" value="ECO:0000270"/>
    <property type="project" value="Gramene"/>
</dbReference>
<dbReference type="CDD" id="cd05015">
    <property type="entry name" value="SIS_PGI_1"/>
    <property type="match status" value="1"/>
</dbReference>
<dbReference type="CDD" id="cd05016">
    <property type="entry name" value="SIS_PGI_2"/>
    <property type="match status" value="1"/>
</dbReference>
<dbReference type="FunFam" id="1.10.1390.10:FF:000002">
    <property type="entry name" value="Glucose-6-phosphate isomerase"/>
    <property type="match status" value="1"/>
</dbReference>
<dbReference type="FunFam" id="3.40.50.10490:FF:000018">
    <property type="entry name" value="Glucose-6-phosphate isomerase"/>
    <property type="match status" value="1"/>
</dbReference>
<dbReference type="FunFam" id="3.40.50.10490:FF:000031">
    <property type="entry name" value="Glucose-6-phosphate isomerase"/>
    <property type="match status" value="1"/>
</dbReference>
<dbReference type="FunFam" id="3.40.50.10490:FF:000048">
    <property type="entry name" value="Glucose-6-phosphate isomerase"/>
    <property type="match status" value="1"/>
</dbReference>
<dbReference type="Gene3D" id="1.10.1390.10">
    <property type="match status" value="1"/>
</dbReference>
<dbReference type="Gene3D" id="3.40.50.10490">
    <property type="entry name" value="Glucose-6-phosphate isomerase like protein, domain 1"/>
    <property type="match status" value="2"/>
</dbReference>
<dbReference type="HAMAP" id="MF_00473">
    <property type="entry name" value="G6P_isomerase"/>
    <property type="match status" value="1"/>
</dbReference>
<dbReference type="InterPro" id="IPR001672">
    <property type="entry name" value="G6P_Isomerase"/>
</dbReference>
<dbReference type="InterPro" id="IPR023096">
    <property type="entry name" value="G6P_Isomerase_C"/>
</dbReference>
<dbReference type="InterPro" id="IPR018189">
    <property type="entry name" value="Phosphoglucose_isomerase_CS"/>
</dbReference>
<dbReference type="InterPro" id="IPR046348">
    <property type="entry name" value="SIS_dom_sf"/>
</dbReference>
<dbReference type="InterPro" id="IPR035476">
    <property type="entry name" value="SIS_PGI_1"/>
</dbReference>
<dbReference type="InterPro" id="IPR035482">
    <property type="entry name" value="SIS_PGI_2"/>
</dbReference>
<dbReference type="NCBIfam" id="NF001211">
    <property type="entry name" value="PRK00179.1"/>
    <property type="match status" value="1"/>
</dbReference>
<dbReference type="PANTHER" id="PTHR11469">
    <property type="entry name" value="GLUCOSE-6-PHOSPHATE ISOMERASE"/>
    <property type="match status" value="1"/>
</dbReference>
<dbReference type="PANTHER" id="PTHR11469:SF1">
    <property type="entry name" value="GLUCOSE-6-PHOSPHATE ISOMERASE"/>
    <property type="match status" value="1"/>
</dbReference>
<dbReference type="Pfam" id="PF00342">
    <property type="entry name" value="PGI"/>
    <property type="match status" value="1"/>
</dbReference>
<dbReference type="PRINTS" id="PR00662">
    <property type="entry name" value="G6PISOMERASE"/>
</dbReference>
<dbReference type="SUPFAM" id="SSF53697">
    <property type="entry name" value="SIS domain"/>
    <property type="match status" value="1"/>
</dbReference>
<dbReference type="PROSITE" id="PS00765">
    <property type="entry name" value="P_GLUCOSE_ISOMERASE_1"/>
    <property type="match status" value="1"/>
</dbReference>
<dbReference type="PROSITE" id="PS00174">
    <property type="entry name" value="P_GLUCOSE_ISOMERASE_2"/>
    <property type="match status" value="1"/>
</dbReference>
<dbReference type="PROSITE" id="PS51463">
    <property type="entry name" value="P_GLUCOSE_ISOMERASE_3"/>
    <property type="match status" value="1"/>
</dbReference>
<sequence>MASSALICDTEQWKGLQAHVGAIQKTHLRDLMDDAERCKAMTAEYEGIFLDYSRQRATGETMEKLFKLAEAAKLKEKIEKMFSGDKINSTENRSVLHVALRAPRDEVIKSDGVNVVPEVWGVKDKIKQFSETFRSGSWVGATGKALTNVVSVGIGGSFLGPLFVHAALQTDPEAAESAKGRQLRFLANVDPVDVARSIKDLDPETTLVVVVSKTFTTAETMLNARTLKEWIVSSLGPDAVAKHMIAVSTNLELVEKFGIDPKNAFAFWDWVGGRYSVCSAVGVLPLSLQYGFPIVQKFLEGAASIDKHFRSSSFEKNIPVLLGLLSVWNVSFLGYPARAILPYSQALEKFAPHIQQLSMESNGKGVSIDGVQLSFETGEIDFGEPGTNGQHSFYQLIHQGRVIPCDFIGVVKSQQPVYLKGEIVSNHDELMSNFFAQPDALAYGKTPEQLHSEKVPEHLISHKTFQGNRPSLSLLLPSLSAYEIGQLLSIYEHRIAVQGFLWGINSFDQWGVELGKSLASQVRKSLHASRMEGKPVQGFNSSTASLLTRYLAVEPSTPYNTTTMPKV</sequence>
<reference key="1">
    <citation type="journal article" date="1996" name="DNA Seq.">
        <title>Characterization of cDNA encoding for phosphoglucose isomerase of rice (Oryza sativa L.).</title>
        <authorList>
            <person name="Nozue F."/>
            <person name="Umeda M."/>
            <person name="Nagamura Y."/>
            <person name="Minobe Y."/>
            <person name="Uchimiya H."/>
        </authorList>
    </citation>
    <scope>NUCLEOTIDE SEQUENCE [MRNA]</scope>
    <scope>FUNCTION</scope>
    <scope>CATALYTIC ACTIVITY</scope>
    <scope>SUBCELLULAR LOCATION</scope>
</reference>
<reference key="2">
    <citation type="journal article" date="2005" name="Nature">
        <title>The map-based sequence of the rice genome.</title>
        <authorList>
            <consortium name="International rice genome sequencing project (IRGSP)"/>
        </authorList>
    </citation>
    <scope>NUCLEOTIDE SEQUENCE [LARGE SCALE GENOMIC DNA]</scope>
    <source>
        <strain>cv. Nipponbare</strain>
    </source>
</reference>
<reference key="3">
    <citation type="journal article" date="2013" name="Rice">
        <title>Improvement of the Oryza sativa Nipponbare reference genome using next generation sequence and optical map data.</title>
        <authorList>
            <person name="Kawahara Y."/>
            <person name="de la Bastide M."/>
            <person name="Hamilton J.P."/>
            <person name="Kanamori H."/>
            <person name="McCombie W.R."/>
            <person name="Ouyang S."/>
            <person name="Schwartz D.C."/>
            <person name="Tanaka T."/>
            <person name="Wu J."/>
            <person name="Zhou S."/>
            <person name="Childs K.L."/>
            <person name="Davidson R.M."/>
            <person name="Lin H."/>
            <person name="Quesada-Ocampo L."/>
            <person name="Vaillancourt B."/>
            <person name="Sakai H."/>
            <person name="Lee S.S."/>
            <person name="Kim J."/>
            <person name="Numa H."/>
            <person name="Itoh T."/>
            <person name="Buell C.R."/>
            <person name="Matsumoto T."/>
        </authorList>
    </citation>
    <scope>GENOME REANNOTATION</scope>
    <source>
        <strain>cv. Nipponbare</strain>
    </source>
</reference>
<gene>
    <name evidence="6" type="ordered locus">Os06g0256500</name>
    <name evidence="4" type="ordered locus">LOC_Os06g14510</name>
    <name evidence="7" type="ORF">P0624H09.14</name>
</gene>
<protein>
    <recommendedName>
        <fullName evidence="4">Glucose-6-phosphate isomerase, cytosolic B</fullName>
        <shortName evidence="4">GPI-B</shortName>
        <ecNumber evidence="2">5.3.1.9</ecNumber>
    </recommendedName>
    <alternativeName>
        <fullName evidence="3">Phosphoglucose isomerase B</fullName>
        <shortName evidence="3">PGI-B</shortName>
    </alternativeName>
    <alternativeName>
        <fullName evidence="4">Phosphohexose isomerase B</fullName>
        <shortName evidence="4">PHI-B</shortName>
    </alternativeName>
</protein>